<evidence type="ECO:0000255" key="1">
    <source>
        <dbReference type="HAMAP-Rule" id="MF_00158"/>
    </source>
</evidence>
<dbReference type="EC" id="6.3.2.1" evidence="1"/>
<dbReference type="EMBL" id="CP000083">
    <property type="protein sequence ID" value="AAZ27905.1"/>
    <property type="molecule type" value="Genomic_DNA"/>
</dbReference>
<dbReference type="RefSeq" id="WP_011045044.1">
    <property type="nucleotide sequence ID" value="NC_003910.7"/>
</dbReference>
<dbReference type="SMR" id="Q47W59"/>
<dbReference type="STRING" id="167879.CPS_4313"/>
<dbReference type="KEGG" id="cps:CPS_4313"/>
<dbReference type="eggNOG" id="COG0414">
    <property type="taxonomic scope" value="Bacteria"/>
</dbReference>
<dbReference type="HOGENOM" id="CLU_047148_0_0_6"/>
<dbReference type="UniPathway" id="UPA00028">
    <property type="reaction ID" value="UER00005"/>
</dbReference>
<dbReference type="Proteomes" id="UP000000547">
    <property type="component" value="Chromosome"/>
</dbReference>
<dbReference type="GO" id="GO:0005829">
    <property type="term" value="C:cytosol"/>
    <property type="evidence" value="ECO:0007669"/>
    <property type="project" value="TreeGrafter"/>
</dbReference>
<dbReference type="GO" id="GO:0005524">
    <property type="term" value="F:ATP binding"/>
    <property type="evidence" value="ECO:0007669"/>
    <property type="project" value="UniProtKB-KW"/>
</dbReference>
<dbReference type="GO" id="GO:0004592">
    <property type="term" value="F:pantoate-beta-alanine ligase activity"/>
    <property type="evidence" value="ECO:0007669"/>
    <property type="project" value="UniProtKB-UniRule"/>
</dbReference>
<dbReference type="GO" id="GO:0015940">
    <property type="term" value="P:pantothenate biosynthetic process"/>
    <property type="evidence" value="ECO:0007669"/>
    <property type="project" value="UniProtKB-UniRule"/>
</dbReference>
<dbReference type="CDD" id="cd00560">
    <property type="entry name" value="PanC"/>
    <property type="match status" value="1"/>
</dbReference>
<dbReference type="FunFam" id="3.40.50.620:FF:000013">
    <property type="entry name" value="Pantothenate synthetase"/>
    <property type="match status" value="1"/>
</dbReference>
<dbReference type="Gene3D" id="3.40.50.620">
    <property type="entry name" value="HUPs"/>
    <property type="match status" value="1"/>
</dbReference>
<dbReference type="Gene3D" id="3.30.1300.10">
    <property type="entry name" value="Pantoate-beta-alanine ligase, C-terminal domain"/>
    <property type="match status" value="1"/>
</dbReference>
<dbReference type="HAMAP" id="MF_00158">
    <property type="entry name" value="PanC"/>
    <property type="match status" value="1"/>
</dbReference>
<dbReference type="InterPro" id="IPR004821">
    <property type="entry name" value="Cyt_trans-like"/>
</dbReference>
<dbReference type="InterPro" id="IPR003721">
    <property type="entry name" value="Pantoate_ligase"/>
</dbReference>
<dbReference type="InterPro" id="IPR042176">
    <property type="entry name" value="Pantoate_ligase_C"/>
</dbReference>
<dbReference type="InterPro" id="IPR014729">
    <property type="entry name" value="Rossmann-like_a/b/a_fold"/>
</dbReference>
<dbReference type="NCBIfam" id="TIGR00125">
    <property type="entry name" value="cyt_tran_rel"/>
    <property type="match status" value="1"/>
</dbReference>
<dbReference type="NCBIfam" id="TIGR00018">
    <property type="entry name" value="panC"/>
    <property type="match status" value="1"/>
</dbReference>
<dbReference type="PANTHER" id="PTHR21299">
    <property type="entry name" value="CYTIDYLATE KINASE/PANTOATE-BETA-ALANINE LIGASE"/>
    <property type="match status" value="1"/>
</dbReference>
<dbReference type="PANTHER" id="PTHR21299:SF1">
    <property type="entry name" value="PANTOATE--BETA-ALANINE LIGASE"/>
    <property type="match status" value="1"/>
</dbReference>
<dbReference type="Pfam" id="PF02569">
    <property type="entry name" value="Pantoate_ligase"/>
    <property type="match status" value="1"/>
</dbReference>
<dbReference type="SUPFAM" id="SSF52374">
    <property type="entry name" value="Nucleotidylyl transferase"/>
    <property type="match status" value="1"/>
</dbReference>
<protein>
    <recommendedName>
        <fullName evidence="1">Pantothenate synthetase</fullName>
        <shortName evidence="1">PS</shortName>
        <ecNumber evidence="1">6.3.2.1</ecNumber>
    </recommendedName>
    <alternativeName>
        <fullName evidence="1">Pantoate--beta-alanine ligase</fullName>
    </alternativeName>
    <alternativeName>
        <fullName evidence="1">Pantoate-activating enzyme</fullName>
    </alternativeName>
</protein>
<gene>
    <name evidence="1" type="primary">panC</name>
    <name type="ordered locus">CPS_4313</name>
</gene>
<keyword id="KW-0067">ATP-binding</keyword>
<keyword id="KW-0963">Cytoplasm</keyword>
<keyword id="KW-0436">Ligase</keyword>
<keyword id="KW-0547">Nucleotide-binding</keyword>
<keyword id="KW-0566">Pantothenate biosynthesis</keyword>
<name>PANC_COLP3</name>
<proteinExistence type="inferred from homology"/>
<feature type="chain" id="PRO_0000128222" description="Pantothenate synthetase">
    <location>
        <begin position="1"/>
        <end position="288"/>
    </location>
</feature>
<feature type="active site" description="Proton donor" evidence="1">
    <location>
        <position position="37"/>
    </location>
</feature>
<feature type="binding site" evidence="1">
    <location>
        <begin position="30"/>
        <end position="37"/>
    </location>
    <ligand>
        <name>ATP</name>
        <dbReference type="ChEBI" id="CHEBI:30616"/>
    </ligand>
</feature>
<feature type="binding site" evidence="1">
    <location>
        <position position="61"/>
    </location>
    <ligand>
        <name>(R)-pantoate</name>
        <dbReference type="ChEBI" id="CHEBI:15980"/>
    </ligand>
</feature>
<feature type="binding site" evidence="1">
    <location>
        <position position="61"/>
    </location>
    <ligand>
        <name>beta-alanine</name>
        <dbReference type="ChEBI" id="CHEBI:57966"/>
    </ligand>
</feature>
<feature type="binding site" evidence="1">
    <location>
        <begin position="149"/>
        <end position="152"/>
    </location>
    <ligand>
        <name>ATP</name>
        <dbReference type="ChEBI" id="CHEBI:30616"/>
    </ligand>
</feature>
<feature type="binding site" evidence="1">
    <location>
        <position position="155"/>
    </location>
    <ligand>
        <name>(R)-pantoate</name>
        <dbReference type="ChEBI" id="CHEBI:15980"/>
    </ligand>
</feature>
<feature type="binding site" evidence="1">
    <location>
        <position position="178"/>
    </location>
    <ligand>
        <name>ATP</name>
        <dbReference type="ChEBI" id="CHEBI:30616"/>
    </ligand>
</feature>
<feature type="binding site" evidence="1">
    <location>
        <begin position="186"/>
        <end position="189"/>
    </location>
    <ligand>
        <name>ATP</name>
        <dbReference type="ChEBI" id="CHEBI:30616"/>
    </ligand>
</feature>
<reference key="1">
    <citation type="journal article" date="2005" name="Proc. Natl. Acad. Sci. U.S.A.">
        <title>The psychrophilic lifestyle as revealed by the genome sequence of Colwellia psychrerythraea 34H through genomic and proteomic analyses.</title>
        <authorList>
            <person name="Methe B.A."/>
            <person name="Nelson K.E."/>
            <person name="Deming J.W."/>
            <person name="Momen B."/>
            <person name="Melamud E."/>
            <person name="Zhang X."/>
            <person name="Moult J."/>
            <person name="Madupu R."/>
            <person name="Nelson W.C."/>
            <person name="Dodson R.J."/>
            <person name="Brinkac L.M."/>
            <person name="Daugherty S.C."/>
            <person name="Durkin A.S."/>
            <person name="DeBoy R.T."/>
            <person name="Kolonay J.F."/>
            <person name="Sullivan S.A."/>
            <person name="Zhou L."/>
            <person name="Davidsen T.M."/>
            <person name="Wu M."/>
            <person name="Huston A.L."/>
            <person name="Lewis M."/>
            <person name="Weaver B."/>
            <person name="Weidman J.F."/>
            <person name="Khouri H."/>
            <person name="Utterback T.R."/>
            <person name="Feldblyum T.V."/>
            <person name="Fraser C.M."/>
        </authorList>
    </citation>
    <scope>NUCLEOTIDE SEQUENCE [LARGE SCALE GENOMIC DNA]</scope>
    <source>
        <strain>34H / ATCC BAA-681</strain>
    </source>
</reference>
<accession>Q47W59</accession>
<comment type="function">
    <text evidence="1">Catalyzes the condensation of pantoate with beta-alanine in an ATP-dependent reaction via a pantoyl-adenylate intermediate.</text>
</comment>
<comment type="catalytic activity">
    <reaction evidence="1">
        <text>(R)-pantoate + beta-alanine + ATP = (R)-pantothenate + AMP + diphosphate + H(+)</text>
        <dbReference type="Rhea" id="RHEA:10912"/>
        <dbReference type="ChEBI" id="CHEBI:15378"/>
        <dbReference type="ChEBI" id="CHEBI:15980"/>
        <dbReference type="ChEBI" id="CHEBI:29032"/>
        <dbReference type="ChEBI" id="CHEBI:30616"/>
        <dbReference type="ChEBI" id="CHEBI:33019"/>
        <dbReference type="ChEBI" id="CHEBI:57966"/>
        <dbReference type="ChEBI" id="CHEBI:456215"/>
        <dbReference type="EC" id="6.3.2.1"/>
    </reaction>
</comment>
<comment type="pathway">
    <text evidence="1">Cofactor biosynthesis; (R)-pantothenate biosynthesis; (R)-pantothenate from (R)-pantoate and beta-alanine: step 1/1.</text>
</comment>
<comment type="subunit">
    <text evidence="1">Homodimer.</text>
</comment>
<comment type="subcellular location">
    <subcellularLocation>
        <location evidence="1">Cytoplasm</location>
    </subcellularLocation>
</comment>
<comment type="miscellaneous">
    <text evidence="1">The reaction proceeds by a bi uni uni bi ping pong mechanism.</text>
</comment>
<comment type="similarity">
    <text evidence="1">Belongs to the pantothenate synthetase family.</text>
</comment>
<organism>
    <name type="scientific">Colwellia psychrerythraea (strain 34H / ATCC BAA-681)</name>
    <name type="common">Vibrio psychroerythus</name>
    <dbReference type="NCBI Taxonomy" id="167879"/>
    <lineage>
        <taxon>Bacteria</taxon>
        <taxon>Pseudomonadati</taxon>
        <taxon>Pseudomonadota</taxon>
        <taxon>Gammaproteobacteria</taxon>
        <taxon>Alteromonadales</taxon>
        <taxon>Colwelliaceae</taxon>
        <taxon>Colwellia</taxon>
    </lineage>
</organism>
<sequence length="288" mass="31559">MKTVSQISELRAQVKAWRQQGLTVAFVPTMGNLHAGHISLVAEAHKHADKVVASIFVNPMQFGVNEDIENYPRTMINDEQKLTAAGTDLLFTPSPDIIYPKGLAKQSFVEVPNISDGYCGESRPGHFRGVATIVCKLFNLVQPDVACFGLKDYQQVQVIQRMVEDLSMPITIIPVATIREESGLALSSRNGYLTEEEKAIAPALHQSLHWLGEQIRAGYAQQDSIDFIGLAKHAAKTINDAGLHTDYLHVCHAETLQPASEDDTQLVILAAAHCGKARLIDNLQVNLA</sequence>